<name>DAPD_SHEHH</name>
<reference key="1">
    <citation type="submission" date="2008-01" db="EMBL/GenBank/DDBJ databases">
        <title>Complete sequence of Shewanella halifaxensis HAW-EB4.</title>
        <authorList>
            <consortium name="US DOE Joint Genome Institute"/>
            <person name="Copeland A."/>
            <person name="Lucas S."/>
            <person name="Lapidus A."/>
            <person name="Glavina del Rio T."/>
            <person name="Dalin E."/>
            <person name="Tice H."/>
            <person name="Bruce D."/>
            <person name="Goodwin L."/>
            <person name="Pitluck S."/>
            <person name="Sims D."/>
            <person name="Brettin T."/>
            <person name="Detter J.C."/>
            <person name="Han C."/>
            <person name="Kuske C.R."/>
            <person name="Schmutz J."/>
            <person name="Larimer F."/>
            <person name="Land M."/>
            <person name="Hauser L."/>
            <person name="Kyrpides N."/>
            <person name="Kim E."/>
            <person name="Zhao J.-S."/>
            <person name="Richardson P."/>
        </authorList>
    </citation>
    <scope>NUCLEOTIDE SEQUENCE [LARGE SCALE GENOMIC DNA]</scope>
    <source>
        <strain>HAW-EB4</strain>
    </source>
</reference>
<organism>
    <name type="scientific">Shewanella halifaxensis (strain HAW-EB4)</name>
    <dbReference type="NCBI Taxonomy" id="458817"/>
    <lineage>
        <taxon>Bacteria</taxon>
        <taxon>Pseudomonadati</taxon>
        <taxon>Pseudomonadota</taxon>
        <taxon>Gammaproteobacteria</taxon>
        <taxon>Alteromonadales</taxon>
        <taxon>Shewanellaceae</taxon>
        <taxon>Shewanella</taxon>
    </lineage>
</organism>
<protein>
    <recommendedName>
        <fullName evidence="1">2,3,4,5-tetrahydropyridine-2,6-dicarboxylate N-succinyltransferase</fullName>
        <ecNumber evidence="1">2.3.1.117</ecNumber>
    </recommendedName>
    <alternativeName>
        <fullName evidence="1">Tetrahydrodipicolinate N-succinyltransferase</fullName>
        <shortName evidence="1">THDP succinyltransferase</shortName>
        <shortName evidence="1">THP succinyltransferase</shortName>
        <shortName evidence="1">Tetrahydropicolinate succinylase</shortName>
    </alternativeName>
</protein>
<feature type="chain" id="PRO_1000083758" description="2,3,4,5-tetrahydropyridine-2,6-dicarboxylate N-succinyltransferase">
    <location>
        <begin position="1"/>
        <end position="274"/>
    </location>
</feature>
<feature type="binding site" evidence="1">
    <location>
        <position position="104"/>
    </location>
    <ligand>
        <name>substrate</name>
    </ligand>
</feature>
<feature type="binding site" evidence="1">
    <location>
        <position position="141"/>
    </location>
    <ligand>
        <name>substrate</name>
    </ligand>
</feature>
<gene>
    <name evidence="1" type="primary">dapD</name>
    <name type="ordered locus">Shal_2984</name>
</gene>
<evidence type="ECO:0000255" key="1">
    <source>
        <dbReference type="HAMAP-Rule" id="MF_00811"/>
    </source>
</evidence>
<dbReference type="EC" id="2.3.1.117" evidence="1"/>
<dbReference type="EMBL" id="CP000931">
    <property type="protein sequence ID" value="ABZ77533.1"/>
    <property type="molecule type" value="Genomic_DNA"/>
</dbReference>
<dbReference type="RefSeq" id="WP_012278059.1">
    <property type="nucleotide sequence ID" value="NC_010334.1"/>
</dbReference>
<dbReference type="SMR" id="B0TP86"/>
<dbReference type="STRING" id="458817.Shal_2984"/>
<dbReference type="KEGG" id="shl:Shal_2984"/>
<dbReference type="eggNOG" id="COG2171">
    <property type="taxonomic scope" value="Bacteria"/>
</dbReference>
<dbReference type="HOGENOM" id="CLU_050859_0_1_6"/>
<dbReference type="OrthoDB" id="9775362at2"/>
<dbReference type="UniPathway" id="UPA00034">
    <property type="reaction ID" value="UER00019"/>
</dbReference>
<dbReference type="Proteomes" id="UP000001317">
    <property type="component" value="Chromosome"/>
</dbReference>
<dbReference type="GO" id="GO:0005737">
    <property type="term" value="C:cytoplasm"/>
    <property type="evidence" value="ECO:0007669"/>
    <property type="project" value="UniProtKB-SubCell"/>
</dbReference>
<dbReference type="GO" id="GO:0008666">
    <property type="term" value="F:2,3,4,5-tetrahydropyridine-2,6-dicarboxylate N-succinyltransferase activity"/>
    <property type="evidence" value="ECO:0007669"/>
    <property type="project" value="UniProtKB-UniRule"/>
</dbReference>
<dbReference type="GO" id="GO:0016779">
    <property type="term" value="F:nucleotidyltransferase activity"/>
    <property type="evidence" value="ECO:0007669"/>
    <property type="project" value="TreeGrafter"/>
</dbReference>
<dbReference type="GO" id="GO:0019877">
    <property type="term" value="P:diaminopimelate biosynthetic process"/>
    <property type="evidence" value="ECO:0007669"/>
    <property type="project" value="UniProtKB-UniRule"/>
</dbReference>
<dbReference type="GO" id="GO:0009089">
    <property type="term" value="P:lysine biosynthetic process via diaminopimelate"/>
    <property type="evidence" value="ECO:0007669"/>
    <property type="project" value="UniProtKB-UniRule"/>
</dbReference>
<dbReference type="CDD" id="cd03350">
    <property type="entry name" value="LbH_THP_succinylT"/>
    <property type="match status" value="1"/>
</dbReference>
<dbReference type="Gene3D" id="2.160.10.10">
    <property type="entry name" value="Hexapeptide repeat proteins"/>
    <property type="match status" value="1"/>
</dbReference>
<dbReference type="Gene3D" id="1.10.166.10">
    <property type="entry name" value="Tetrahydrodipicolinate-N-succinyltransferase, N-terminal domain"/>
    <property type="match status" value="1"/>
</dbReference>
<dbReference type="HAMAP" id="MF_00811">
    <property type="entry name" value="DapD"/>
    <property type="match status" value="1"/>
</dbReference>
<dbReference type="InterPro" id="IPR005664">
    <property type="entry name" value="DapD_Trfase_Hexpep_rpt_fam"/>
</dbReference>
<dbReference type="InterPro" id="IPR001451">
    <property type="entry name" value="Hexapep"/>
</dbReference>
<dbReference type="InterPro" id="IPR018357">
    <property type="entry name" value="Hexapep_transf_CS"/>
</dbReference>
<dbReference type="InterPro" id="IPR023180">
    <property type="entry name" value="THP_succinylTrfase_dom1"/>
</dbReference>
<dbReference type="InterPro" id="IPR037133">
    <property type="entry name" value="THP_succinylTrfase_N_sf"/>
</dbReference>
<dbReference type="InterPro" id="IPR011004">
    <property type="entry name" value="Trimer_LpxA-like_sf"/>
</dbReference>
<dbReference type="NCBIfam" id="TIGR00965">
    <property type="entry name" value="dapD"/>
    <property type="match status" value="1"/>
</dbReference>
<dbReference type="NCBIfam" id="NF008808">
    <property type="entry name" value="PRK11830.1"/>
    <property type="match status" value="1"/>
</dbReference>
<dbReference type="PANTHER" id="PTHR19136:SF52">
    <property type="entry name" value="2,3,4,5-TETRAHYDROPYRIDINE-2,6-DICARBOXYLATE N-SUCCINYLTRANSFERASE"/>
    <property type="match status" value="1"/>
</dbReference>
<dbReference type="PANTHER" id="PTHR19136">
    <property type="entry name" value="MOLYBDENUM COFACTOR GUANYLYLTRANSFERASE"/>
    <property type="match status" value="1"/>
</dbReference>
<dbReference type="Pfam" id="PF14602">
    <property type="entry name" value="Hexapep_2"/>
    <property type="match status" value="1"/>
</dbReference>
<dbReference type="Pfam" id="PF14805">
    <property type="entry name" value="THDPS_N_2"/>
    <property type="match status" value="1"/>
</dbReference>
<dbReference type="SUPFAM" id="SSF51161">
    <property type="entry name" value="Trimeric LpxA-like enzymes"/>
    <property type="match status" value="1"/>
</dbReference>
<dbReference type="PROSITE" id="PS00101">
    <property type="entry name" value="HEXAPEP_TRANSFERASES"/>
    <property type="match status" value="1"/>
</dbReference>
<keyword id="KW-0012">Acyltransferase</keyword>
<keyword id="KW-0028">Amino-acid biosynthesis</keyword>
<keyword id="KW-0963">Cytoplasm</keyword>
<keyword id="KW-0220">Diaminopimelate biosynthesis</keyword>
<keyword id="KW-0457">Lysine biosynthesis</keyword>
<keyword id="KW-0677">Repeat</keyword>
<keyword id="KW-0808">Transferase</keyword>
<accession>B0TP86</accession>
<sequence>MEALRQRIEAAFEARAEITPTTVEPSVRADVEKVIAMLDTGEARVAEKIDGQWHVHQWLKKAVLLSFRIFDNQVIDGAETKYFDKVPMKFADYDEARFRKEAIRVVPPAAVRKGSFIGKNTVLMPSYVNLGAYVDEGTMVDTWATVGSCAQIGKNVHLSGGVGIGGVLEPLQAGPTIIEDNCFIGARSEVVEGVIVEEGSVISMGVYIGQSTRIYDRETGEVHYGRVPAGSVVVAGNLPSKCGTYSLYAAIIVKKVDEKTRGKVGINELLRIVD</sequence>
<proteinExistence type="inferred from homology"/>
<comment type="catalytic activity">
    <reaction evidence="1">
        <text>(S)-2,3,4,5-tetrahydrodipicolinate + succinyl-CoA + H2O = (S)-2-succinylamino-6-oxoheptanedioate + CoA</text>
        <dbReference type="Rhea" id="RHEA:17325"/>
        <dbReference type="ChEBI" id="CHEBI:15377"/>
        <dbReference type="ChEBI" id="CHEBI:15685"/>
        <dbReference type="ChEBI" id="CHEBI:16845"/>
        <dbReference type="ChEBI" id="CHEBI:57287"/>
        <dbReference type="ChEBI" id="CHEBI:57292"/>
        <dbReference type="EC" id="2.3.1.117"/>
    </reaction>
</comment>
<comment type="pathway">
    <text evidence="1">Amino-acid biosynthesis; L-lysine biosynthesis via DAP pathway; LL-2,6-diaminopimelate from (S)-tetrahydrodipicolinate (succinylase route): step 1/3.</text>
</comment>
<comment type="subunit">
    <text evidence="1">Homotrimer.</text>
</comment>
<comment type="subcellular location">
    <subcellularLocation>
        <location evidence="1">Cytoplasm</location>
    </subcellularLocation>
</comment>
<comment type="similarity">
    <text evidence="1">Belongs to the transferase hexapeptide repeat family.</text>
</comment>